<organism>
    <name type="scientific">Trichormus variabilis (strain ATCC 29413 / PCC 7937)</name>
    <name type="common">Anabaena variabilis</name>
    <dbReference type="NCBI Taxonomy" id="240292"/>
    <lineage>
        <taxon>Bacteria</taxon>
        <taxon>Bacillati</taxon>
        <taxon>Cyanobacteriota</taxon>
        <taxon>Cyanophyceae</taxon>
        <taxon>Nostocales</taxon>
        <taxon>Nostocaceae</taxon>
        <taxon>Trichormus</taxon>
    </lineage>
</organism>
<gene>
    <name evidence="1" type="primary">ndhN</name>
    <name type="ordered locus">Ava_0690</name>
</gene>
<protein>
    <recommendedName>
        <fullName evidence="1">NAD(P)H-quinone oxidoreductase subunit N</fullName>
        <ecNumber evidence="1">7.1.1.-</ecNumber>
    </recommendedName>
    <alternativeName>
        <fullName evidence="1">NAD(P)H dehydrogenase I subunit N</fullName>
        <shortName evidence="1">NDH-1 subunit N</shortName>
        <shortName evidence="1">NDH-N</shortName>
    </alternativeName>
</protein>
<sequence>MALITTGNGLIRDLEKFGSVGVYVPLEGGFEGRYRRRLRAAGYTTLQFTARGLGDVAAYLTGVHGVRPPHLGKKSSGNGAAVGNVYYLPPIVGSQLEHLPPKSKGLVLWIIEGHILSDQEVEFLTDLPKLEPRVKVVVERGGDRTFRWKALKDTFSASYQAV</sequence>
<comment type="function">
    <text evidence="1">NDH-1 shuttles electrons from an unknown electron donor, via FMN and iron-sulfur (Fe-S) centers, to quinones in the respiratory and/or the photosynthetic chain. The immediate electron acceptor for the enzyme in this species is believed to be plastoquinone. Couples the redox reaction to proton translocation, and thus conserves the redox energy in a proton gradient. Cyanobacterial NDH-1 also plays a role in inorganic carbon-concentration.</text>
</comment>
<comment type="catalytic activity">
    <reaction evidence="1">
        <text>a plastoquinone + NADH + (n+1) H(+)(in) = a plastoquinol + NAD(+) + n H(+)(out)</text>
        <dbReference type="Rhea" id="RHEA:42608"/>
        <dbReference type="Rhea" id="RHEA-COMP:9561"/>
        <dbReference type="Rhea" id="RHEA-COMP:9562"/>
        <dbReference type="ChEBI" id="CHEBI:15378"/>
        <dbReference type="ChEBI" id="CHEBI:17757"/>
        <dbReference type="ChEBI" id="CHEBI:57540"/>
        <dbReference type="ChEBI" id="CHEBI:57945"/>
        <dbReference type="ChEBI" id="CHEBI:62192"/>
    </reaction>
</comment>
<comment type="catalytic activity">
    <reaction evidence="1">
        <text>a plastoquinone + NADPH + (n+1) H(+)(in) = a plastoquinol + NADP(+) + n H(+)(out)</text>
        <dbReference type="Rhea" id="RHEA:42612"/>
        <dbReference type="Rhea" id="RHEA-COMP:9561"/>
        <dbReference type="Rhea" id="RHEA-COMP:9562"/>
        <dbReference type="ChEBI" id="CHEBI:15378"/>
        <dbReference type="ChEBI" id="CHEBI:17757"/>
        <dbReference type="ChEBI" id="CHEBI:57783"/>
        <dbReference type="ChEBI" id="CHEBI:58349"/>
        <dbReference type="ChEBI" id="CHEBI:62192"/>
    </reaction>
</comment>
<comment type="subunit">
    <text evidence="1">NDH-1 can be composed of about 15 different subunits; different subcomplexes with different compositions have been identified which probably have different functions.</text>
</comment>
<comment type="subcellular location">
    <subcellularLocation>
        <location evidence="1">Cellular thylakoid membrane</location>
        <topology evidence="1">Peripheral membrane protein</topology>
        <orientation evidence="1">Cytoplasmic side</orientation>
    </subcellularLocation>
</comment>
<comment type="similarity">
    <text evidence="1">Belongs to the complex I NdhN subunit family.</text>
</comment>
<feature type="chain" id="PRO_0000352214" description="NAD(P)H-quinone oxidoreductase subunit N">
    <location>
        <begin position="1"/>
        <end position="162"/>
    </location>
</feature>
<name>NDHN_TRIV2</name>
<reference key="1">
    <citation type="journal article" date="2014" name="Stand. Genomic Sci.">
        <title>Complete genome sequence of Anabaena variabilis ATCC 29413.</title>
        <authorList>
            <person name="Thiel T."/>
            <person name="Pratte B.S."/>
            <person name="Zhong J."/>
            <person name="Goodwin L."/>
            <person name="Copeland A."/>
            <person name="Lucas S."/>
            <person name="Han C."/>
            <person name="Pitluck S."/>
            <person name="Land M.L."/>
            <person name="Kyrpides N.C."/>
            <person name="Woyke T."/>
        </authorList>
    </citation>
    <scope>NUCLEOTIDE SEQUENCE [LARGE SCALE GENOMIC DNA]</scope>
    <source>
        <strain>ATCC 29413 / PCC 7937</strain>
    </source>
</reference>
<dbReference type="EC" id="7.1.1.-" evidence="1"/>
<dbReference type="EMBL" id="CP000117">
    <property type="protein sequence ID" value="ABA20314.1"/>
    <property type="molecule type" value="Genomic_DNA"/>
</dbReference>
<dbReference type="SMR" id="Q3MFC2"/>
<dbReference type="STRING" id="240292.Ava_0690"/>
<dbReference type="KEGG" id="ava:Ava_0690"/>
<dbReference type="eggNOG" id="ENOG502ZBMI">
    <property type="taxonomic scope" value="Bacteria"/>
</dbReference>
<dbReference type="HOGENOM" id="CLU_087432_0_0_3"/>
<dbReference type="Proteomes" id="UP000002533">
    <property type="component" value="Chromosome"/>
</dbReference>
<dbReference type="GO" id="GO:0031676">
    <property type="term" value="C:plasma membrane-derived thylakoid membrane"/>
    <property type="evidence" value="ECO:0007669"/>
    <property type="project" value="UniProtKB-SubCell"/>
</dbReference>
<dbReference type="GO" id="GO:0016655">
    <property type="term" value="F:oxidoreductase activity, acting on NAD(P)H, quinone or similar compound as acceptor"/>
    <property type="evidence" value="ECO:0007669"/>
    <property type="project" value="UniProtKB-UniRule"/>
</dbReference>
<dbReference type="GO" id="GO:0048038">
    <property type="term" value="F:quinone binding"/>
    <property type="evidence" value="ECO:0007669"/>
    <property type="project" value="UniProtKB-KW"/>
</dbReference>
<dbReference type="HAMAP" id="MF_01353">
    <property type="entry name" value="NDH1_NDH1N"/>
    <property type="match status" value="1"/>
</dbReference>
<dbReference type="InterPro" id="IPR020874">
    <property type="entry name" value="NAD(P)H-quinone_OxRdtase_su_N"/>
</dbReference>
<dbReference type="PANTHER" id="PTHR35515">
    <property type="entry name" value="NAD(P)H-QUINONE OXIDOREDUCTASE SUBUNIT N, CHLOROPLASTIC"/>
    <property type="match status" value="1"/>
</dbReference>
<dbReference type="PANTHER" id="PTHR35515:SF1">
    <property type="entry name" value="NAD(P)H-QUINONE OXIDOREDUCTASE SUBUNIT N, CHLOROPLASTIC"/>
    <property type="match status" value="1"/>
</dbReference>
<dbReference type="Pfam" id="PF11909">
    <property type="entry name" value="NdhN"/>
    <property type="match status" value="1"/>
</dbReference>
<evidence type="ECO:0000255" key="1">
    <source>
        <dbReference type="HAMAP-Rule" id="MF_01353"/>
    </source>
</evidence>
<keyword id="KW-0472">Membrane</keyword>
<keyword id="KW-0520">NAD</keyword>
<keyword id="KW-0521">NADP</keyword>
<keyword id="KW-0618">Plastoquinone</keyword>
<keyword id="KW-0874">Quinone</keyword>
<keyword id="KW-0793">Thylakoid</keyword>
<keyword id="KW-1278">Translocase</keyword>
<keyword id="KW-0813">Transport</keyword>
<accession>Q3MFC2</accession>
<proteinExistence type="inferred from homology"/>